<keyword id="KW-0255">Endonuclease</keyword>
<keyword id="KW-0378">Hydrolase</keyword>
<keyword id="KW-0540">Nuclease</keyword>
<keyword id="KW-0694">RNA-binding</keyword>
<keyword id="KW-0819">tRNA processing</keyword>
<accession>P25817</accession>
<proteinExistence type="inferred from homology"/>
<evidence type="ECO:0000255" key="1">
    <source>
        <dbReference type="HAMAP-Rule" id="MF_00227"/>
    </source>
</evidence>
<name>RNPA_STRBI</name>
<protein>
    <recommendedName>
        <fullName evidence="1">Ribonuclease P protein component</fullName>
        <shortName evidence="1">RNase P protein</shortName>
        <shortName evidence="1">RNaseP protein</shortName>
        <ecNumber evidence="1">3.1.26.5</ecNumber>
    </recommendedName>
    <alternativeName>
        <fullName evidence="1">Protein C5</fullName>
    </alternativeName>
</protein>
<sequence length="123" mass="13145">MLPTENRLRRREDFATAVRRGRRAGRPLLVVHLRSGATDPHAPGESAPPTRAGFVVSKAVGGAVVRNQVKRRLRHLVCDRLSALPPGSLVVVRALPGAGDADHAQLARDLDAALQRLLGGGTR</sequence>
<organism>
    <name type="scientific">Streptomyces bikiniensis</name>
    <dbReference type="NCBI Taxonomy" id="1896"/>
    <lineage>
        <taxon>Bacteria</taxon>
        <taxon>Bacillati</taxon>
        <taxon>Actinomycetota</taxon>
        <taxon>Actinomycetes</taxon>
        <taxon>Kitasatosporales</taxon>
        <taxon>Streptomycetaceae</taxon>
        <taxon>Streptomyces</taxon>
    </lineage>
</organism>
<dbReference type="EC" id="3.1.26.5" evidence="1"/>
<dbReference type="EMBL" id="M83112">
    <property type="protein sequence ID" value="AAA26808.1"/>
    <property type="molecule type" value="Genomic_DNA"/>
</dbReference>
<dbReference type="PIR" id="JC1202">
    <property type="entry name" value="JC1202"/>
</dbReference>
<dbReference type="SMR" id="P25817"/>
<dbReference type="GO" id="GO:0030677">
    <property type="term" value="C:ribonuclease P complex"/>
    <property type="evidence" value="ECO:0007669"/>
    <property type="project" value="TreeGrafter"/>
</dbReference>
<dbReference type="GO" id="GO:0042781">
    <property type="term" value="F:3'-tRNA processing endoribonuclease activity"/>
    <property type="evidence" value="ECO:0007669"/>
    <property type="project" value="TreeGrafter"/>
</dbReference>
<dbReference type="GO" id="GO:0004526">
    <property type="term" value="F:ribonuclease P activity"/>
    <property type="evidence" value="ECO:0007669"/>
    <property type="project" value="UniProtKB-UniRule"/>
</dbReference>
<dbReference type="GO" id="GO:0000049">
    <property type="term" value="F:tRNA binding"/>
    <property type="evidence" value="ECO:0007669"/>
    <property type="project" value="UniProtKB-UniRule"/>
</dbReference>
<dbReference type="GO" id="GO:0001682">
    <property type="term" value="P:tRNA 5'-leader removal"/>
    <property type="evidence" value="ECO:0007669"/>
    <property type="project" value="UniProtKB-UniRule"/>
</dbReference>
<dbReference type="Gene3D" id="3.30.230.10">
    <property type="match status" value="1"/>
</dbReference>
<dbReference type="HAMAP" id="MF_00227">
    <property type="entry name" value="RNase_P"/>
    <property type="match status" value="1"/>
</dbReference>
<dbReference type="InterPro" id="IPR020568">
    <property type="entry name" value="Ribosomal_Su5_D2-typ_SF"/>
</dbReference>
<dbReference type="InterPro" id="IPR014721">
    <property type="entry name" value="Ribsml_uS5_D2-typ_fold_subgr"/>
</dbReference>
<dbReference type="InterPro" id="IPR000100">
    <property type="entry name" value="RNase_P"/>
</dbReference>
<dbReference type="InterPro" id="IPR020539">
    <property type="entry name" value="RNase_P_CS"/>
</dbReference>
<dbReference type="NCBIfam" id="TIGR00188">
    <property type="entry name" value="rnpA"/>
    <property type="match status" value="1"/>
</dbReference>
<dbReference type="PANTHER" id="PTHR33992">
    <property type="entry name" value="RIBONUCLEASE P PROTEIN COMPONENT"/>
    <property type="match status" value="1"/>
</dbReference>
<dbReference type="PANTHER" id="PTHR33992:SF1">
    <property type="entry name" value="RIBONUCLEASE P PROTEIN COMPONENT"/>
    <property type="match status" value="1"/>
</dbReference>
<dbReference type="Pfam" id="PF00825">
    <property type="entry name" value="Ribonuclease_P"/>
    <property type="match status" value="1"/>
</dbReference>
<dbReference type="SUPFAM" id="SSF54211">
    <property type="entry name" value="Ribosomal protein S5 domain 2-like"/>
    <property type="match status" value="1"/>
</dbReference>
<dbReference type="PROSITE" id="PS00648">
    <property type="entry name" value="RIBONUCLEASE_P"/>
    <property type="match status" value="1"/>
</dbReference>
<reference key="1">
    <citation type="journal article" date="1992" name="Gene">
        <title>Sequences encoding the protein and RNA components of ribonuclease P from Streptomyces bikiniensis var. zorbonensis.</title>
        <authorList>
            <person name="Morse D.P."/>
            <person name="Schmidt F.J."/>
        </authorList>
    </citation>
    <scope>NUCLEOTIDE SEQUENCE [GENOMIC DNA]</scope>
    <source>
        <strain>Var. Zorbonensis</strain>
    </source>
</reference>
<feature type="chain" id="PRO_0000198537" description="Ribonuclease P protein component">
    <location>
        <begin position="1"/>
        <end position="123"/>
    </location>
</feature>
<comment type="function">
    <text>RNaseP catalyzes the removal of the 5'-leader sequence from pre-tRNA to produce the mature 5'-terminus. It can also cleave other RNA substrates such as 4.5S RNA. The protein component plays an auxiliary but essential role in vivo by binding to the 5'-leader sequence and broadening the substrate specificity of the ribozyme.</text>
</comment>
<comment type="catalytic activity">
    <reaction evidence="1">
        <text>Endonucleolytic cleavage of RNA, removing 5'-extranucleotides from tRNA precursor.</text>
        <dbReference type="EC" id="3.1.26.5"/>
    </reaction>
</comment>
<comment type="subunit">
    <text>Consists of a catalytic RNA component (M1 or rnpB) and a protein subunit.</text>
</comment>
<comment type="similarity">
    <text evidence="1">Belongs to the RnpA family.</text>
</comment>
<gene>
    <name evidence="1" type="primary">rnpA</name>
</gene>